<keyword id="KW-0963">Cytoplasm</keyword>
<keyword id="KW-0328">Glycosyltransferase</keyword>
<keyword id="KW-0660">Purine salvage</keyword>
<keyword id="KW-0808">Transferase</keyword>
<gene>
    <name evidence="1" type="primary">apt</name>
    <name type="ordered locus">Rpal_4990</name>
</gene>
<comment type="function">
    <text evidence="1">Catalyzes a salvage reaction resulting in the formation of AMP, that is energically less costly than de novo synthesis.</text>
</comment>
<comment type="catalytic activity">
    <reaction evidence="1">
        <text>AMP + diphosphate = 5-phospho-alpha-D-ribose 1-diphosphate + adenine</text>
        <dbReference type="Rhea" id="RHEA:16609"/>
        <dbReference type="ChEBI" id="CHEBI:16708"/>
        <dbReference type="ChEBI" id="CHEBI:33019"/>
        <dbReference type="ChEBI" id="CHEBI:58017"/>
        <dbReference type="ChEBI" id="CHEBI:456215"/>
        <dbReference type="EC" id="2.4.2.7"/>
    </reaction>
</comment>
<comment type="pathway">
    <text evidence="1">Purine metabolism; AMP biosynthesis via salvage pathway; AMP from adenine: step 1/1.</text>
</comment>
<comment type="subunit">
    <text evidence="1">Homodimer.</text>
</comment>
<comment type="subcellular location">
    <subcellularLocation>
        <location evidence="1">Cytoplasm</location>
    </subcellularLocation>
</comment>
<comment type="similarity">
    <text evidence="1">Belongs to the purine/pyrimidine phosphoribosyltransferase family.</text>
</comment>
<protein>
    <recommendedName>
        <fullName evidence="1">Adenine phosphoribosyltransferase</fullName>
        <shortName evidence="1">APRT</shortName>
        <ecNumber evidence="1">2.4.2.7</ecNumber>
    </recommendedName>
</protein>
<organism>
    <name type="scientific">Rhodopseudomonas palustris (strain TIE-1)</name>
    <dbReference type="NCBI Taxonomy" id="395960"/>
    <lineage>
        <taxon>Bacteria</taxon>
        <taxon>Pseudomonadati</taxon>
        <taxon>Pseudomonadota</taxon>
        <taxon>Alphaproteobacteria</taxon>
        <taxon>Hyphomicrobiales</taxon>
        <taxon>Nitrobacteraceae</taxon>
        <taxon>Rhodopseudomonas</taxon>
    </lineage>
</organism>
<accession>B3QA01</accession>
<reference key="1">
    <citation type="submission" date="2008-05" db="EMBL/GenBank/DDBJ databases">
        <title>Complete sequence of Rhodopseudomonas palustris TIE-1.</title>
        <authorList>
            <consortium name="US DOE Joint Genome Institute"/>
            <person name="Lucas S."/>
            <person name="Copeland A."/>
            <person name="Lapidus A."/>
            <person name="Glavina del Rio T."/>
            <person name="Dalin E."/>
            <person name="Tice H."/>
            <person name="Pitluck S."/>
            <person name="Chain P."/>
            <person name="Malfatti S."/>
            <person name="Shin M."/>
            <person name="Vergez L."/>
            <person name="Lang D."/>
            <person name="Schmutz J."/>
            <person name="Larimer F."/>
            <person name="Land M."/>
            <person name="Hauser L."/>
            <person name="Kyrpides N."/>
            <person name="Mikhailova N."/>
            <person name="Emerson D."/>
            <person name="Newman D.K."/>
            <person name="Roden E."/>
            <person name="Richardson P."/>
        </authorList>
    </citation>
    <scope>NUCLEOTIDE SEQUENCE [LARGE SCALE GENOMIC DNA]</scope>
    <source>
        <strain>TIE-1</strain>
    </source>
</reference>
<evidence type="ECO:0000255" key="1">
    <source>
        <dbReference type="HAMAP-Rule" id="MF_00004"/>
    </source>
</evidence>
<name>APT_RHOPT</name>
<dbReference type="EC" id="2.4.2.7" evidence="1"/>
<dbReference type="EMBL" id="CP001096">
    <property type="protein sequence ID" value="ACF03479.1"/>
    <property type="molecule type" value="Genomic_DNA"/>
</dbReference>
<dbReference type="RefSeq" id="WP_011160026.1">
    <property type="nucleotide sequence ID" value="NC_011004.1"/>
</dbReference>
<dbReference type="SMR" id="B3QA01"/>
<dbReference type="KEGG" id="rpt:Rpal_4990"/>
<dbReference type="HOGENOM" id="CLU_063339_3_0_5"/>
<dbReference type="OrthoDB" id="9803963at2"/>
<dbReference type="UniPathway" id="UPA00588">
    <property type="reaction ID" value="UER00646"/>
</dbReference>
<dbReference type="Proteomes" id="UP000001725">
    <property type="component" value="Chromosome"/>
</dbReference>
<dbReference type="GO" id="GO:0005737">
    <property type="term" value="C:cytoplasm"/>
    <property type="evidence" value="ECO:0007669"/>
    <property type="project" value="UniProtKB-SubCell"/>
</dbReference>
<dbReference type="GO" id="GO:0002055">
    <property type="term" value="F:adenine binding"/>
    <property type="evidence" value="ECO:0007669"/>
    <property type="project" value="TreeGrafter"/>
</dbReference>
<dbReference type="GO" id="GO:0003999">
    <property type="term" value="F:adenine phosphoribosyltransferase activity"/>
    <property type="evidence" value="ECO:0007669"/>
    <property type="project" value="UniProtKB-UniRule"/>
</dbReference>
<dbReference type="GO" id="GO:0016208">
    <property type="term" value="F:AMP binding"/>
    <property type="evidence" value="ECO:0007669"/>
    <property type="project" value="TreeGrafter"/>
</dbReference>
<dbReference type="GO" id="GO:0006168">
    <property type="term" value="P:adenine salvage"/>
    <property type="evidence" value="ECO:0007669"/>
    <property type="project" value="InterPro"/>
</dbReference>
<dbReference type="GO" id="GO:0044209">
    <property type="term" value="P:AMP salvage"/>
    <property type="evidence" value="ECO:0007669"/>
    <property type="project" value="UniProtKB-UniRule"/>
</dbReference>
<dbReference type="GO" id="GO:0006166">
    <property type="term" value="P:purine ribonucleoside salvage"/>
    <property type="evidence" value="ECO:0007669"/>
    <property type="project" value="UniProtKB-KW"/>
</dbReference>
<dbReference type="CDD" id="cd06223">
    <property type="entry name" value="PRTases_typeI"/>
    <property type="match status" value="1"/>
</dbReference>
<dbReference type="FunFam" id="3.40.50.2020:FF:000021">
    <property type="entry name" value="Adenine phosphoribosyltransferase"/>
    <property type="match status" value="1"/>
</dbReference>
<dbReference type="Gene3D" id="3.40.50.2020">
    <property type="match status" value="1"/>
</dbReference>
<dbReference type="HAMAP" id="MF_00004">
    <property type="entry name" value="Aden_phosphoribosyltr"/>
    <property type="match status" value="1"/>
</dbReference>
<dbReference type="InterPro" id="IPR005764">
    <property type="entry name" value="Ade_phspho_trans"/>
</dbReference>
<dbReference type="InterPro" id="IPR000836">
    <property type="entry name" value="PRibTrfase_dom"/>
</dbReference>
<dbReference type="InterPro" id="IPR029057">
    <property type="entry name" value="PRTase-like"/>
</dbReference>
<dbReference type="InterPro" id="IPR050054">
    <property type="entry name" value="UPRTase/APRTase"/>
</dbReference>
<dbReference type="NCBIfam" id="TIGR01090">
    <property type="entry name" value="apt"/>
    <property type="match status" value="1"/>
</dbReference>
<dbReference type="NCBIfam" id="NF002634">
    <property type="entry name" value="PRK02304.1-3"/>
    <property type="match status" value="1"/>
</dbReference>
<dbReference type="NCBIfam" id="NF002636">
    <property type="entry name" value="PRK02304.1-5"/>
    <property type="match status" value="1"/>
</dbReference>
<dbReference type="PANTHER" id="PTHR32315">
    <property type="entry name" value="ADENINE PHOSPHORIBOSYLTRANSFERASE"/>
    <property type="match status" value="1"/>
</dbReference>
<dbReference type="PANTHER" id="PTHR32315:SF3">
    <property type="entry name" value="ADENINE PHOSPHORIBOSYLTRANSFERASE"/>
    <property type="match status" value="1"/>
</dbReference>
<dbReference type="Pfam" id="PF00156">
    <property type="entry name" value="Pribosyltran"/>
    <property type="match status" value="1"/>
</dbReference>
<dbReference type="SUPFAM" id="SSF53271">
    <property type="entry name" value="PRTase-like"/>
    <property type="match status" value="1"/>
</dbReference>
<dbReference type="PROSITE" id="PS00103">
    <property type="entry name" value="PUR_PYR_PR_TRANSFER"/>
    <property type="match status" value="1"/>
</dbReference>
<sequence>MTPEFANDLKASVRAIPDYPKPGIIFRDITTLLGEPRAFRRAIDELVQPWAGSKIDKVAGIEARGFIIGGAIAHQVSSGFVPIRKKGKLPHTCVSMEYALEYGTDKIEVHVDAITPGERVILVDDLIATGGTAEGAIKLLRQIGAEVVAACFVIDLPELGGAAKIRAMGVPVRTLVAFEGH</sequence>
<feature type="chain" id="PRO_1000088997" description="Adenine phosphoribosyltransferase">
    <location>
        <begin position="1"/>
        <end position="181"/>
    </location>
</feature>
<proteinExistence type="inferred from homology"/>